<proteinExistence type="evidence at protein level"/>
<gene>
    <name type="primary">SVF1</name>
    <name type="synonym">SGI1</name>
    <name type="ordered locus">YDR346C</name>
</gene>
<keyword id="KW-0963">Cytoplasm</keyword>
<keyword id="KW-0256">Endoplasmic reticulum</keyword>
<keyword id="KW-0333">Golgi apparatus</keyword>
<keyword id="KW-0445">Lipid transport</keyword>
<keyword id="KW-0472">Membrane</keyword>
<keyword id="KW-0539">Nucleus</keyword>
<keyword id="KW-1185">Reference proteome</keyword>
<keyword id="KW-0813">Transport</keyword>
<feature type="chain" id="PRO_0000072336" description="Ceramide-binding protein SVF1">
    <location>
        <begin position="1"/>
        <end position="481"/>
    </location>
</feature>
<feature type="region of interest" description="Peripherally associates with membranes" evidence="6">
    <location>
        <begin position="1"/>
        <end position="18"/>
    </location>
</feature>
<feature type="region of interest" description="Disordered" evidence="1">
    <location>
        <begin position="197"/>
        <end position="251"/>
    </location>
</feature>
<feature type="region of interest" description="Disordered" evidence="1">
    <location>
        <begin position="358"/>
        <end position="389"/>
    </location>
</feature>
<feature type="compositionally biased region" description="Acidic residues" evidence="1">
    <location>
        <begin position="203"/>
        <end position="245"/>
    </location>
</feature>
<feature type="compositionally biased region" description="Acidic residues" evidence="1">
    <location>
        <begin position="373"/>
        <end position="388"/>
    </location>
</feature>
<feature type="mutagenesis site" description="Abolishes localization to the cis-Golgi network membrane." evidence="6">
    <original>L</original>
    <variation>E</variation>
    <location>
        <position position="2"/>
    </location>
</feature>
<feature type="mutagenesis site" description="Protein increasingly targeted to the cis-Golgi and endoplasmic reticulum membranes. No effect on ceramide binding." evidence="6">
    <original>GG</original>
    <variation>AA</variation>
    <location>
        <begin position="7"/>
        <end position="8"/>
    </location>
</feature>
<feature type="mutagenesis site" description="Abolishes localization to the cis-Golgi network membrane." evidence="6">
    <original>V</original>
    <variation>D</variation>
    <location>
        <position position="12"/>
    </location>
</feature>
<feature type="mutagenesis site" description="Strongly inhibits ceramide binding, and interferes with phospholipid binding. Abolishes localization to the cis-Golgi network membrane." evidence="6">
    <original>HH</original>
    <variation>AA</variation>
    <location>
        <begin position="273"/>
        <end position="274"/>
    </location>
</feature>
<sequence length="481" mass="54368">MLKWIKGGISAVTGMAEPEYGKDYIHSVADRVKNKQPYRETSREDFFWQAPDHTNVESVIFYFSDLKTGIFGFAQVIHSNIIGLHTASQFTFRIFDSKNPEDLNIWTSTKLENFYIEGPNFYADNLSVELSEDGESYHIQSSVCDLSVVDLHIRRLTPGAKIGDDPATYYGNNINEPWGSMRHVFWPRNACHGTIKVKKEVIPESDEEESSADEDDNEDEDEESGDSEEESGSEEESDSEEVEITYEDRTITFKEEDPAISTFIMAFQGMKPHHAAKAWNFMFFHSEKYSAVLMEFTTPKSYANTKISAGIITDDKEVLAMTTNNLVEHLNSEIDSVGWKVPKDIKITFKGINTKVKDEQLESENGTEQALQGEDEKEDEKEDEEEEEYKNVAEENKICAVVEGPLNNLVERIDVMGEIPSFVKNIVSGVAGTKPFIYQYADPKSSTLQINGGEKIHGVAWTEVTFISESDVISEESYNEA</sequence>
<accession>Q05515</accession>
<accession>D6VSX6</accession>
<organism>
    <name type="scientific">Saccharomyces cerevisiae (strain ATCC 204508 / S288c)</name>
    <name type="common">Baker's yeast</name>
    <dbReference type="NCBI Taxonomy" id="559292"/>
    <lineage>
        <taxon>Eukaryota</taxon>
        <taxon>Fungi</taxon>
        <taxon>Dikarya</taxon>
        <taxon>Ascomycota</taxon>
        <taxon>Saccharomycotina</taxon>
        <taxon>Saccharomycetes</taxon>
        <taxon>Saccharomycetales</taxon>
        <taxon>Saccharomycetaceae</taxon>
        <taxon>Saccharomyces</taxon>
    </lineage>
</organism>
<comment type="function">
    <text evidence="2 5 6">Ceramide-binding protein that may transfer ceramides from the endoplasmic reticulum membrane to the cis-Golgi network membrane, and is thereby required for the biosynthesis of complex sphingolipids (PubMed:36897280). Required for survival in response to oxidative stress (PubMed:16034825). Involved in the diauxic shift (PubMed:12244097).</text>
</comment>
<comment type="subcellular location">
    <subcellularLocation>
        <location evidence="6">Golgi apparatus</location>
        <location evidence="6">cis-Golgi network membrane</location>
        <topology evidence="6">Peripheral membrane protein</topology>
    </subcellularLocation>
    <subcellularLocation>
        <location evidence="6">Endoplasmic reticulum membrane</location>
        <topology evidence="6">Peripheral membrane protein</topology>
    </subcellularLocation>
    <subcellularLocation>
        <location evidence="3 6">Cytoplasm</location>
    </subcellularLocation>
    <subcellularLocation>
        <location evidence="3">Nucleus</location>
    </subcellularLocation>
    <text evidence="6">Localizes to the interface between the cis-Golgi network and endoplasmic reticulum exit sites.</text>
</comment>
<comment type="PTM">
    <text evidence="6">Acetylated at the N-terminus in a NatC complex-dependent manner, which is required for membrane targeting.</text>
</comment>
<comment type="disruption phenotype">
    <text evidence="6">Leads to an increase in cellular ceramide levels and a decrease in complex sphingolipid levels (PubMed:36897280). Mildly decreases cellular phytosphingosine (PHS) levels, with no increase in dihydrosphingosine (DHS) levels (PubMed:36897280). Sensitive to Auroebasidin A (IPC synthase inhibitor) (PubMed:36897280). Simultaneous knockout of NVJ2 to leads to myriocin sensitivity (sphingosine biosynthesis inhibitor) (PubMed:36897280). Simultaneous knockout of SUR2 leads to a growth defect (PubMed:36897280).</text>
</comment>
<comment type="miscellaneous">
    <text evidence="4">Present with 45200 molecules/cell in log phase SD medium.</text>
</comment>
<comment type="miscellaneous">
    <text>Expression in mammalian cells increases survival under conditions inducing apoptosis.</text>
</comment>
<comment type="similarity">
    <text evidence="8">Belongs to the SVF1 family.</text>
</comment>
<dbReference type="EMBL" id="U51032">
    <property type="protein sequence ID" value="AAB64782.1"/>
    <property type="molecule type" value="Genomic_DNA"/>
</dbReference>
<dbReference type="EMBL" id="BK006938">
    <property type="protein sequence ID" value="DAA12186.1"/>
    <property type="molecule type" value="Genomic_DNA"/>
</dbReference>
<dbReference type="PIR" id="S70111">
    <property type="entry name" value="S70111"/>
</dbReference>
<dbReference type="RefSeq" id="NP_010633.3">
    <property type="nucleotide sequence ID" value="NM_001180654.3"/>
</dbReference>
<dbReference type="BioGRID" id="32402">
    <property type="interactions" value="105"/>
</dbReference>
<dbReference type="DIP" id="DIP-5243N"/>
<dbReference type="FunCoup" id="Q05515">
    <property type="interactions" value="155"/>
</dbReference>
<dbReference type="IntAct" id="Q05515">
    <property type="interactions" value="17"/>
</dbReference>
<dbReference type="MINT" id="Q05515"/>
<dbReference type="STRING" id="4932.YDR346C"/>
<dbReference type="iPTMnet" id="Q05515"/>
<dbReference type="PaxDb" id="4932-YDR346C"/>
<dbReference type="PeptideAtlas" id="Q05515"/>
<dbReference type="EnsemblFungi" id="YDR346C_mRNA">
    <property type="protein sequence ID" value="YDR346C"/>
    <property type="gene ID" value="YDR346C"/>
</dbReference>
<dbReference type="GeneID" id="851947"/>
<dbReference type="KEGG" id="sce:YDR346C"/>
<dbReference type="AGR" id="SGD:S000002754"/>
<dbReference type="SGD" id="S000002754">
    <property type="gene designation" value="SVF1"/>
</dbReference>
<dbReference type="VEuPathDB" id="FungiDB:YDR346C"/>
<dbReference type="eggNOG" id="ENOG502QQY3">
    <property type="taxonomic scope" value="Eukaryota"/>
</dbReference>
<dbReference type="GeneTree" id="ENSGT00990000203553"/>
<dbReference type="HOGENOM" id="CLU_030205_3_1_1"/>
<dbReference type="InParanoid" id="Q05515"/>
<dbReference type="OMA" id="AFWPRCV"/>
<dbReference type="OrthoDB" id="2590239at2759"/>
<dbReference type="BioCyc" id="YEAST:G3O-29900-MONOMER"/>
<dbReference type="BioGRID-ORCS" id="851947">
    <property type="hits" value="2 hits in 10 CRISPR screens"/>
</dbReference>
<dbReference type="PRO" id="PR:Q05515"/>
<dbReference type="Proteomes" id="UP000002311">
    <property type="component" value="Chromosome IV"/>
</dbReference>
<dbReference type="RNAct" id="Q05515">
    <property type="molecule type" value="protein"/>
</dbReference>
<dbReference type="GO" id="GO:0005801">
    <property type="term" value="C:cis-Golgi network"/>
    <property type="evidence" value="ECO:0000314"/>
    <property type="project" value="SGD"/>
</dbReference>
<dbReference type="GO" id="GO:0033106">
    <property type="term" value="C:cis-Golgi network membrane"/>
    <property type="evidence" value="ECO:0000314"/>
    <property type="project" value="UniProtKB"/>
</dbReference>
<dbReference type="GO" id="GO:0005737">
    <property type="term" value="C:cytoplasm"/>
    <property type="evidence" value="ECO:0000314"/>
    <property type="project" value="UniProtKB"/>
</dbReference>
<dbReference type="GO" id="GO:0070971">
    <property type="term" value="C:endoplasmic reticulum exit site"/>
    <property type="evidence" value="ECO:0000314"/>
    <property type="project" value="UniProtKB"/>
</dbReference>
<dbReference type="GO" id="GO:0005789">
    <property type="term" value="C:endoplasmic reticulum membrane"/>
    <property type="evidence" value="ECO:0007669"/>
    <property type="project" value="UniProtKB-SubCell"/>
</dbReference>
<dbReference type="GO" id="GO:0005634">
    <property type="term" value="C:nucleus"/>
    <property type="evidence" value="ECO:0007005"/>
    <property type="project" value="SGD"/>
</dbReference>
<dbReference type="GO" id="GO:0097001">
    <property type="term" value="F:ceramide binding"/>
    <property type="evidence" value="ECO:0000314"/>
    <property type="project" value="UniProtKB"/>
</dbReference>
<dbReference type="GO" id="GO:0034599">
    <property type="term" value="P:cellular response to oxidative stress"/>
    <property type="evidence" value="ECO:0000315"/>
    <property type="project" value="SGD"/>
</dbReference>
<dbReference type="GO" id="GO:0035621">
    <property type="term" value="P:ER to Golgi ceramide transport"/>
    <property type="evidence" value="ECO:0000315"/>
    <property type="project" value="UniProtKB"/>
</dbReference>
<dbReference type="GO" id="GO:0030148">
    <property type="term" value="P:sphingolipid biosynthetic process"/>
    <property type="evidence" value="ECO:0000315"/>
    <property type="project" value="SGD"/>
</dbReference>
<dbReference type="InterPro" id="IPR051385">
    <property type="entry name" value="Ceramide-binding_SVF1"/>
</dbReference>
<dbReference type="InterPro" id="IPR033394">
    <property type="entry name" value="Svf1-like_C"/>
</dbReference>
<dbReference type="InterPro" id="IPR013931">
    <property type="entry name" value="Svf1-like_N"/>
</dbReference>
<dbReference type="PANTHER" id="PTHR47107:SF1">
    <property type="entry name" value="CERAMIDE-BINDING PROTEIN SVF1-RELATED"/>
    <property type="match status" value="1"/>
</dbReference>
<dbReference type="PANTHER" id="PTHR47107">
    <property type="entry name" value="SVF1-LIKE PROTEIN YDR222W-RELATED"/>
    <property type="match status" value="1"/>
</dbReference>
<dbReference type="Pfam" id="PF08622">
    <property type="entry name" value="Svf1"/>
    <property type="match status" value="1"/>
</dbReference>
<dbReference type="Pfam" id="PF17187">
    <property type="entry name" value="Svf1_C"/>
    <property type="match status" value="1"/>
</dbReference>
<evidence type="ECO:0000256" key="1">
    <source>
        <dbReference type="SAM" id="MobiDB-lite"/>
    </source>
</evidence>
<evidence type="ECO:0000269" key="2">
    <source>
    </source>
</evidence>
<evidence type="ECO:0000269" key="3">
    <source>
    </source>
</evidence>
<evidence type="ECO:0000269" key="4">
    <source>
    </source>
</evidence>
<evidence type="ECO:0000269" key="5">
    <source>
    </source>
</evidence>
<evidence type="ECO:0000269" key="6">
    <source>
    </source>
</evidence>
<evidence type="ECO:0000303" key="7">
    <source>
    </source>
</evidence>
<evidence type="ECO:0000305" key="8"/>
<name>SVF1_YEAST</name>
<protein>
    <recommendedName>
        <fullName evidence="7">Ceramide-binding protein SVF1</fullName>
    </recommendedName>
</protein>
<reference key="1">
    <citation type="journal article" date="1997" name="Nature">
        <title>The nucleotide sequence of Saccharomyces cerevisiae chromosome IV.</title>
        <authorList>
            <person name="Jacq C."/>
            <person name="Alt-Moerbe J."/>
            <person name="Andre B."/>
            <person name="Arnold W."/>
            <person name="Bahr A."/>
            <person name="Ballesta J.P.G."/>
            <person name="Bargues M."/>
            <person name="Baron L."/>
            <person name="Becker A."/>
            <person name="Biteau N."/>
            <person name="Bloecker H."/>
            <person name="Blugeon C."/>
            <person name="Boskovic J."/>
            <person name="Brandt P."/>
            <person name="Brueckner M."/>
            <person name="Buitrago M.J."/>
            <person name="Coster F."/>
            <person name="Delaveau T."/>
            <person name="del Rey F."/>
            <person name="Dujon B."/>
            <person name="Eide L.G."/>
            <person name="Garcia-Cantalejo J.M."/>
            <person name="Goffeau A."/>
            <person name="Gomez-Peris A."/>
            <person name="Granotier C."/>
            <person name="Hanemann V."/>
            <person name="Hankeln T."/>
            <person name="Hoheisel J.D."/>
            <person name="Jaeger W."/>
            <person name="Jimenez A."/>
            <person name="Jonniaux J.-L."/>
            <person name="Kraemer C."/>
            <person name="Kuester H."/>
            <person name="Laamanen P."/>
            <person name="Legros Y."/>
            <person name="Louis E.J."/>
            <person name="Moeller-Rieker S."/>
            <person name="Monnet A."/>
            <person name="Moro M."/>
            <person name="Mueller-Auer S."/>
            <person name="Nussbaumer B."/>
            <person name="Paricio N."/>
            <person name="Paulin L."/>
            <person name="Perea J."/>
            <person name="Perez-Alonso M."/>
            <person name="Perez-Ortin J.E."/>
            <person name="Pohl T.M."/>
            <person name="Prydz H."/>
            <person name="Purnelle B."/>
            <person name="Rasmussen S.W."/>
            <person name="Remacha M.A."/>
            <person name="Revuelta J.L."/>
            <person name="Rieger M."/>
            <person name="Salom D."/>
            <person name="Saluz H.P."/>
            <person name="Saiz J.E."/>
            <person name="Saren A.-M."/>
            <person name="Schaefer M."/>
            <person name="Scharfe M."/>
            <person name="Schmidt E.R."/>
            <person name="Schneider C."/>
            <person name="Scholler P."/>
            <person name="Schwarz S."/>
            <person name="Soler-Mira A."/>
            <person name="Urrestarazu L.A."/>
            <person name="Verhasselt P."/>
            <person name="Vissers S."/>
            <person name="Voet M."/>
            <person name="Volckaert G."/>
            <person name="Wagner G."/>
            <person name="Wambutt R."/>
            <person name="Wedler E."/>
            <person name="Wedler H."/>
            <person name="Woelfl S."/>
            <person name="Harris D.E."/>
            <person name="Bowman S."/>
            <person name="Brown D."/>
            <person name="Churcher C.M."/>
            <person name="Connor R."/>
            <person name="Dedman K."/>
            <person name="Gentles S."/>
            <person name="Hamlin N."/>
            <person name="Hunt S."/>
            <person name="Jones L."/>
            <person name="McDonald S."/>
            <person name="Murphy L.D."/>
            <person name="Niblett D."/>
            <person name="Odell C."/>
            <person name="Oliver K."/>
            <person name="Rajandream M.A."/>
            <person name="Richards C."/>
            <person name="Shore L."/>
            <person name="Walsh S.V."/>
            <person name="Barrell B.G."/>
            <person name="Dietrich F.S."/>
            <person name="Mulligan J.T."/>
            <person name="Allen E."/>
            <person name="Araujo R."/>
            <person name="Aviles E."/>
            <person name="Berno A."/>
            <person name="Carpenter J."/>
            <person name="Chen E."/>
            <person name="Cherry J.M."/>
            <person name="Chung E."/>
            <person name="Duncan M."/>
            <person name="Hunicke-Smith S."/>
            <person name="Hyman R.W."/>
            <person name="Komp C."/>
            <person name="Lashkari D."/>
            <person name="Lew H."/>
            <person name="Lin D."/>
            <person name="Mosedale D."/>
            <person name="Nakahara K."/>
            <person name="Namath A."/>
            <person name="Oefner P."/>
            <person name="Oh C."/>
            <person name="Petel F.X."/>
            <person name="Roberts D."/>
            <person name="Schramm S."/>
            <person name="Schroeder M."/>
            <person name="Shogren T."/>
            <person name="Shroff N."/>
            <person name="Winant A."/>
            <person name="Yelton M.A."/>
            <person name="Botstein D."/>
            <person name="Davis R.W."/>
            <person name="Johnston M."/>
            <person name="Andrews S."/>
            <person name="Brinkman R."/>
            <person name="Cooper J."/>
            <person name="Ding H."/>
            <person name="Du Z."/>
            <person name="Favello A."/>
            <person name="Fulton L."/>
            <person name="Gattung S."/>
            <person name="Greco T."/>
            <person name="Hallsworth K."/>
            <person name="Hawkins J."/>
            <person name="Hillier L.W."/>
            <person name="Jier M."/>
            <person name="Johnson D."/>
            <person name="Johnston L."/>
            <person name="Kirsten J."/>
            <person name="Kucaba T."/>
            <person name="Langston Y."/>
            <person name="Latreille P."/>
            <person name="Le T."/>
            <person name="Mardis E."/>
            <person name="Menezes S."/>
            <person name="Miller N."/>
            <person name="Nhan M."/>
            <person name="Pauley A."/>
            <person name="Peluso D."/>
            <person name="Rifkin L."/>
            <person name="Riles L."/>
            <person name="Taich A."/>
            <person name="Trevaskis E."/>
            <person name="Vignati D."/>
            <person name="Wilcox L."/>
            <person name="Wohldman P."/>
            <person name="Vaudin M."/>
            <person name="Wilson R."/>
            <person name="Waterston R."/>
            <person name="Albermann K."/>
            <person name="Hani J."/>
            <person name="Heumann K."/>
            <person name="Kleine K."/>
            <person name="Mewes H.-W."/>
            <person name="Zollner A."/>
            <person name="Zaccaria P."/>
        </authorList>
    </citation>
    <scope>NUCLEOTIDE SEQUENCE [LARGE SCALE GENOMIC DNA]</scope>
    <source>
        <strain>ATCC 204508 / S288c</strain>
    </source>
</reference>
<reference key="2">
    <citation type="journal article" date="2014" name="G3 (Bethesda)">
        <title>The reference genome sequence of Saccharomyces cerevisiae: Then and now.</title>
        <authorList>
            <person name="Engel S.R."/>
            <person name="Dietrich F.S."/>
            <person name="Fisk D.G."/>
            <person name="Binkley G."/>
            <person name="Balakrishnan R."/>
            <person name="Costanzo M.C."/>
            <person name="Dwight S.S."/>
            <person name="Hitz B.C."/>
            <person name="Karra K."/>
            <person name="Nash R.S."/>
            <person name="Weng S."/>
            <person name="Wong E.D."/>
            <person name="Lloyd P."/>
            <person name="Skrzypek M.S."/>
            <person name="Miyasato S.R."/>
            <person name="Simison M."/>
            <person name="Cherry J.M."/>
        </authorList>
    </citation>
    <scope>GENOME REANNOTATION</scope>
    <source>
        <strain>ATCC 204508 / S288c</strain>
    </source>
</reference>
<reference key="3">
    <citation type="journal article" date="2002" name="J. Biol. Chem.">
        <title>Bcl-x(L) complements Saccharomyces cerevisiae genes that facilitate the switch from glycolytic to oxidative metabolism.</title>
        <authorList>
            <person name="Vander Heiden M.G."/>
            <person name="Choy J.S."/>
            <person name="VanderWeele D.J."/>
            <person name="Brace J.L."/>
            <person name="Harris M.H."/>
            <person name="Bauer D.E."/>
            <person name="Prange B."/>
            <person name="Kron S.J."/>
            <person name="Thompson C.B."/>
            <person name="Rudin C.M."/>
        </authorList>
    </citation>
    <scope>FUNCTION</scope>
</reference>
<reference key="4">
    <citation type="journal article" date="2003" name="Nature">
        <title>Global analysis of protein localization in budding yeast.</title>
        <authorList>
            <person name="Huh W.-K."/>
            <person name="Falvo J.V."/>
            <person name="Gerke L.C."/>
            <person name="Carroll A.S."/>
            <person name="Howson R.W."/>
            <person name="Weissman J.S."/>
            <person name="O'Shea E.K."/>
        </authorList>
    </citation>
    <scope>SUBCELLULAR LOCATION [LARGE SCALE ANALYSIS]</scope>
</reference>
<reference key="5">
    <citation type="journal article" date="2003" name="Nature">
        <title>Global analysis of protein expression in yeast.</title>
        <authorList>
            <person name="Ghaemmaghami S."/>
            <person name="Huh W.-K."/>
            <person name="Bower K."/>
            <person name="Howson R.W."/>
            <person name="Belle A."/>
            <person name="Dephoure N."/>
            <person name="O'Shea E.K."/>
            <person name="Weissman J.S."/>
        </authorList>
    </citation>
    <scope>LEVEL OF PROTEIN EXPRESSION [LARGE SCALE ANALYSIS]</scope>
</reference>
<reference key="6">
    <citation type="journal article" date="2005" name="Yeast">
        <title>Svf1 inhibits reactive oxygen species generation and promotes survival under conditions of oxidative stress in Saccharomyces cerevisiae.</title>
        <authorList>
            <person name="Brace J.L."/>
            <person name="Vanderweele D.J."/>
            <person name="Rudin C.M."/>
        </authorList>
    </citation>
    <scope>FUNCTION</scope>
</reference>
<reference key="7">
    <citation type="journal article" date="2023" name="J. Cell Biol.">
        <title>Yeast Svf1 binds ceramides and contributes to sphingolipid metabolism at the ER cis-Golgi interface.</title>
        <authorList>
            <person name="Limar S."/>
            <person name="Koerner C."/>
            <person name="Martinez-Montanes F."/>
            <person name="Stancheva V.G."/>
            <person name="Wolf V.N."/>
            <person name="Walter S."/>
            <person name="Miller E.A."/>
            <person name="Ejsing C.S."/>
            <person name="Galassi V.V."/>
            <person name="Froehlich F."/>
        </authorList>
    </citation>
    <scope>FUNCTION</scope>
    <scope>SUBCELLULAR LOCATION</scope>
    <scope>ACETYLATION AT THE N-TERMINUS</scope>
    <scope>IDENTIFICATION BY MASS SPECTROMETRY</scope>
    <scope>DISRUPTION PHENOTYPE</scope>
    <scope>MUTAGENESIS OF LEU-2; 7-GLY-GLY-8; VAL-12 AND 273-HIS-HIS-274</scope>
</reference>